<name>NU6M_PONAB</name>
<geneLocation type="mitochondrion"/>
<dbReference type="EC" id="7.1.1.2" evidence="1"/>
<dbReference type="EMBL" id="X97707">
    <property type="protein sequence ID" value="CAA66294.1"/>
    <property type="molecule type" value="Genomic_DNA"/>
</dbReference>
<dbReference type="RefSeq" id="NP_007846.1">
    <property type="nucleotide sequence ID" value="NC_002083.1"/>
</dbReference>
<dbReference type="SMR" id="P92700"/>
<dbReference type="FunCoup" id="P92700">
    <property type="interactions" value="331"/>
</dbReference>
<dbReference type="STRING" id="9601.ENSPPYP00000023450"/>
<dbReference type="Ensembl" id="ENSPPYT00000024451.1">
    <property type="protein sequence ID" value="ENSPPYP00000023450.1"/>
    <property type="gene ID" value="ENSPPYG00000020972.1"/>
</dbReference>
<dbReference type="GeneID" id="808476"/>
<dbReference type="KEGG" id="pon:808476"/>
<dbReference type="CTD" id="4541"/>
<dbReference type="eggNOG" id="ENOG502S2Q2">
    <property type="taxonomic scope" value="Eukaryota"/>
</dbReference>
<dbReference type="GeneTree" id="ENSGT00390000003988"/>
<dbReference type="HOGENOM" id="CLU_129718_0_0_1"/>
<dbReference type="InParanoid" id="P92700"/>
<dbReference type="OMA" id="WVIYDTG"/>
<dbReference type="TreeFam" id="TF343324"/>
<dbReference type="Proteomes" id="UP000001595">
    <property type="component" value="Mitochondrion"/>
</dbReference>
<dbReference type="GO" id="GO:0005743">
    <property type="term" value="C:mitochondrial inner membrane"/>
    <property type="evidence" value="ECO:0000250"/>
    <property type="project" value="UniProtKB"/>
</dbReference>
<dbReference type="GO" id="GO:0008137">
    <property type="term" value="F:NADH dehydrogenase (ubiquinone) activity"/>
    <property type="evidence" value="ECO:0000250"/>
    <property type="project" value="UniProtKB"/>
</dbReference>
<dbReference type="GO" id="GO:0006120">
    <property type="term" value="P:mitochondrial electron transport, NADH to ubiquinone"/>
    <property type="evidence" value="ECO:0000250"/>
    <property type="project" value="UniProtKB"/>
</dbReference>
<dbReference type="GO" id="GO:0032981">
    <property type="term" value="P:mitochondrial respiratory chain complex I assembly"/>
    <property type="evidence" value="ECO:0000250"/>
    <property type="project" value="UniProtKB"/>
</dbReference>
<dbReference type="InterPro" id="IPR050269">
    <property type="entry name" value="ComplexI_Subunit6"/>
</dbReference>
<dbReference type="InterPro" id="IPR001457">
    <property type="entry name" value="NADH_UbQ/plastoQ_OxRdtase_su6"/>
</dbReference>
<dbReference type="PANTHER" id="PTHR11435">
    <property type="entry name" value="NADH UBIQUINONE OXIDOREDUCTASE SUBUNIT ND6"/>
    <property type="match status" value="1"/>
</dbReference>
<dbReference type="PANTHER" id="PTHR11435:SF1">
    <property type="entry name" value="NADH-UBIQUINONE OXIDOREDUCTASE CHAIN 6"/>
    <property type="match status" value="1"/>
</dbReference>
<dbReference type="Pfam" id="PF00499">
    <property type="entry name" value="Oxidored_q3"/>
    <property type="match status" value="1"/>
</dbReference>
<proteinExistence type="inferred from homology"/>
<accession>P92700</accession>
<comment type="function">
    <text evidence="1">Core subunit of the mitochondrial membrane respiratory chain NADH dehydrogenase (Complex I) which catalyzes electron transfer from NADH through the respiratory chain, using ubiquinone as an electron acceptor. Essential for the catalytic activity and assembly of complex I.</text>
</comment>
<comment type="catalytic activity">
    <reaction evidence="1">
        <text>a ubiquinone + NADH + 5 H(+)(in) = a ubiquinol + NAD(+) + 4 H(+)(out)</text>
        <dbReference type="Rhea" id="RHEA:29091"/>
        <dbReference type="Rhea" id="RHEA-COMP:9565"/>
        <dbReference type="Rhea" id="RHEA-COMP:9566"/>
        <dbReference type="ChEBI" id="CHEBI:15378"/>
        <dbReference type="ChEBI" id="CHEBI:16389"/>
        <dbReference type="ChEBI" id="CHEBI:17976"/>
        <dbReference type="ChEBI" id="CHEBI:57540"/>
        <dbReference type="ChEBI" id="CHEBI:57945"/>
        <dbReference type="EC" id="7.1.1.2"/>
    </reaction>
</comment>
<comment type="subunit">
    <text evidence="2">Core subunit of respiratory chain NADH dehydrogenase (Complex I) which is composed of 45 different subunits.</text>
</comment>
<comment type="subcellular location">
    <subcellularLocation>
        <location evidence="2">Mitochondrion inner membrane</location>
        <topology evidence="3">Multi-pass membrane protein</topology>
    </subcellularLocation>
</comment>
<comment type="similarity">
    <text evidence="4">Belongs to the complex I subunit 6 family.</text>
</comment>
<reference key="1">
    <citation type="journal article" date="1996" name="J. Mol. Evol.">
        <title>The mitochondrial DNA molecule of Sumatran orangutan and a molecular proposal for two (Bornean and Sumatran) species of orangutan.</title>
        <authorList>
            <person name="Xu X."/>
            <person name="Arnason U."/>
        </authorList>
    </citation>
    <scope>NUCLEOTIDE SEQUENCE [LARGE SCALE GENOMIC DNA]</scope>
</reference>
<keyword id="KW-0249">Electron transport</keyword>
<keyword id="KW-0472">Membrane</keyword>
<keyword id="KW-0496">Mitochondrion</keyword>
<keyword id="KW-0999">Mitochondrion inner membrane</keyword>
<keyword id="KW-0520">NAD</keyword>
<keyword id="KW-1185">Reference proteome</keyword>
<keyword id="KW-0679">Respiratory chain</keyword>
<keyword id="KW-1278">Translocase</keyword>
<keyword id="KW-0812">Transmembrane</keyword>
<keyword id="KW-1133">Transmembrane helix</keyword>
<keyword id="KW-0813">Transport</keyword>
<keyword id="KW-0830">Ubiquinone</keyword>
<organism>
    <name type="scientific">Pongo abelii</name>
    <name type="common">Sumatran orangutan</name>
    <name type="synonym">Pongo pygmaeus abelii</name>
    <dbReference type="NCBI Taxonomy" id="9601"/>
    <lineage>
        <taxon>Eukaryota</taxon>
        <taxon>Metazoa</taxon>
        <taxon>Chordata</taxon>
        <taxon>Craniata</taxon>
        <taxon>Vertebrata</taxon>
        <taxon>Euteleostomi</taxon>
        <taxon>Mammalia</taxon>
        <taxon>Eutheria</taxon>
        <taxon>Euarchontoglires</taxon>
        <taxon>Primates</taxon>
        <taxon>Haplorrhini</taxon>
        <taxon>Catarrhini</taxon>
        <taxon>Hominidae</taxon>
        <taxon>Pongo</taxon>
    </lineage>
</organism>
<sequence>MTYALFLLSVILVMGFVGFSSKPSPIYGGLVLIISGAVGCAVILNCGGGYMGLMVFLIYLGGMMVVFGYTTAMAIEEYPEAWGSGVEVLVSVLVGLVMEVGLVLWVKEYDGVVVVVNFNSVGSWMIYEGEGSGLIREDPIGAGALYDYGRWLVVVTGWTLFVGVYVVIEIARGN</sequence>
<evidence type="ECO:0000250" key="1">
    <source>
        <dbReference type="UniProtKB" id="P03923"/>
    </source>
</evidence>
<evidence type="ECO:0000250" key="2">
    <source>
        <dbReference type="UniProtKB" id="P03924"/>
    </source>
</evidence>
<evidence type="ECO:0000255" key="3"/>
<evidence type="ECO:0000305" key="4"/>
<gene>
    <name type="primary">MT-ND6</name>
    <name type="synonym">MTND6</name>
    <name type="synonym">NADH6</name>
    <name type="synonym">ND6</name>
</gene>
<protein>
    <recommendedName>
        <fullName>NADH-ubiquinone oxidoreductase chain 6</fullName>
        <ecNumber evidence="1">7.1.1.2</ecNumber>
    </recommendedName>
    <alternativeName>
        <fullName>NADH dehydrogenase subunit 6</fullName>
    </alternativeName>
</protein>
<feature type="chain" id="PRO_0000118319" description="NADH-ubiquinone oxidoreductase chain 6">
    <location>
        <begin position="1"/>
        <end position="174"/>
    </location>
</feature>
<feature type="transmembrane region" description="Helical" evidence="3">
    <location>
        <begin position="1"/>
        <end position="21"/>
    </location>
</feature>
<feature type="transmembrane region" description="Helical" evidence="3">
    <location>
        <begin position="24"/>
        <end position="44"/>
    </location>
</feature>
<feature type="transmembrane region" description="Helical" evidence="3">
    <location>
        <begin position="47"/>
        <end position="67"/>
    </location>
</feature>
<feature type="transmembrane region" description="Helical" evidence="3">
    <location>
        <begin position="86"/>
        <end position="106"/>
    </location>
</feature>
<feature type="transmembrane region" description="Helical" evidence="3">
    <location>
        <begin position="111"/>
        <end position="131"/>
    </location>
</feature>
<feature type="transmembrane region" description="Helical" evidence="3">
    <location>
        <begin position="151"/>
        <end position="171"/>
    </location>
</feature>